<comment type="function">
    <text evidence="1">Catalyzes the attachment of tyrosine to tRNA(Tyr) in a two-step reaction: tyrosine is first activated by ATP to form Tyr-AMP and then transferred to the acceptor end of tRNA(Tyr).</text>
</comment>
<comment type="catalytic activity">
    <reaction evidence="1">
        <text>tRNA(Tyr) + L-tyrosine + ATP = L-tyrosyl-tRNA(Tyr) + AMP + diphosphate + H(+)</text>
        <dbReference type="Rhea" id="RHEA:10220"/>
        <dbReference type="Rhea" id="RHEA-COMP:9706"/>
        <dbReference type="Rhea" id="RHEA-COMP:9707"/>
        <dbReference type="ChEBI" id="CHEBI:15378"/>
        <dbReference type="ChEBI" id="CHEBI:30616"/>
        <dbReference type="ChEBI" id="CHEBI:33019"/>
        <dbReference type="ChEBI" id="CHEBI:58315"/>
        <dbReference type="ChEBI" id="CHEBI:78442"/>
        <dbReference type="ChEBI" id="CHEBI:78536"/>
        <dbReference type="ChEBI" id="CHEBI:456215"/>
        <dbReference type="EC" id="6.1.1.1"/>
    </reaction>
</comment>
<comment type="subunit">
    <text evidence="1">Homodimer.</text>
</comment>
<comment type="subcellular location">
    <subcellularLocation>
        <location evidence="1">Cytoplasm</location>
    </subcellularLocation>
</comment>
<comment type="similarity">
    <text evidence="1">Belongs to the class-I aminoacyl-tRNA synthetase family. TyrS type 1 subfamily.</text>
</comment>
<name>SYY_ECOUT</name>
<dbReference type="EC" id="6.1.1.1" evidence="1"/>
<dbReference type="EMBL" id="CP000243">
    <property type="protein sequence ID" value="ABE07306.1"/>
    <property type="molecule type" value="Genomic_DNA"/>
</dbReference>
<dbReference type="SMR" id="Q1RBF8"/>
<dbReference type="KEGG" id="eci:UTI89_C1828"/>
<dbReference type="HOGENOM" id="CLU_024003_0_3_6"/>
<dbReference type="Proteomes" id="UP000001952">
    <property type="component" value="Chromosome"/>
</dbReference>
<dbReference type="GO" id="GO:0005829">
    <property type="term" value="C:cytosol"/>
    <property type="evidence" value="ECO:0007669"/>
    <property type="project" value="TreeGrafter"/>
</dbReference>
<dbReference type="GO" id="GO:0005524">
    <property type="term" value="F:ATP binding"/>
    <property type="evidence" value="ECO:0007669"/>
    <property type="project" value="UniProtKB-UniRule"/>
</dbReference>
<dbReference type="GO" id="GO:0003723">
    <property type="term" value="F:RNA binding"/>
    <property type="evidence" value="ECO:0007669"/>
    <property type="project" value="UniProtKB-KW"/>
</dbReference>
<dbReference type="GO" id="GO:0004831">
    <property type="term" value="F:tyrosine-tRNA ligase activity"/>
    <property type="evidence" value="ECO:0007669"/>
    <property type="project" value="UniProtKB-UniRule"/>
</dbReference>
<dbReference type="GO" id="GO:0006437">
    <property type="term" value="P:tyrosyl-tRNA aminoacylation"/>
    <property type="evidence" value="ECO:0007669"/>
    <property type="project" value="UniProtKB-UniRule"/>
</dbReference>
<dbReference type="CDD" id="cd00165">
    <property type="entry name" value="S4"/>
    <property type="match status" value="1"/>
</dbReference>
<dbReference type="CDD" id="cd00805">
    <property type="entry name" value="TyrRS_core"/>
    <property type="match status" value="1"/>
</dbReference>
<dbReference type="FunFam" id="1.10.240.10:FF:000001">
    <property type="entry name" value="Tyrosine--tRNA ligase"/>
    <property type="match status" value="1"/>
</dbReference>
<dbReference type="FunFam" id="3.10.290.10:FF:000007">
    <property type="entry name" value="Tyrosine--tRNA ligase"/>
    <property type="match status" value="1"/>
</dbReference>
<dbReference type="FunFam" id="3.40.50.620:FF:000008">
    <property type="entry name" value="Tyrosine--tRNA ligase"/>
    <property type="match status" value="1"/>
</dbReference>
<dbReference type="Gene3D" id="3.40.50.620">
    <property type="entry name" value="HUPs"/>
    <property type="match status" value="1"/>
</dbReference>
<dbReference type="Gene3D" id="3.10.290.10">
    <property type="entry name" value="RNA-binding S4 domain"/>
    <property type="match status" value="1"/>
</dbReference>
<dbReference type="Gene3D" id="1.10.240.10">
    <property type="entry name" value="Tyrosyl-Transfer RNA Synthetase"/>
    <property type="match status" value="1"/>
</dbReference>
<dbReference type="HAMAP" id="MF_02006">
    <property type="entry name" value="Tyr_tRNA_synth_type1"/>
    <property type="match status" value="1"/>
</dbReference>
<dbReference type="InterPro" id="IPR001412">
    <property type="entry name" value="aa-tRNA-synth_I_CS"/>
</dbReference>
<dbReference type="InterPro" id="IPR002305">
    <property type="entry name" value="aa-tRNA-synth_Ic"/>
</dbReference>
<dbReference type="InterPro" id="IPR014729">
    <property type="entry name" value="Rossmann-like_a/b/a_fold"/>
</dbReference>
<dbReference type="InterPro" id="IPR002942">
    <property type="entry name" value="S4_RNA-bd"/>
</dbReference>
<dbReference type="InterPro" id="IPR036986">
    <property type="entry name" value="S4_RNA-bd_sf"/>
</dbReference>
<dbReference type="InterPro" id="IPR054608">
    <property type="entry name" value="SYY-like_C"/>
</dbReference>
<dbReference type="InterPro" id="IPR002307">
    <property type="entry name" value="Tyr-tRNA-ligase"/>
</dbReference>
<dbReference type="InterPro" id="IPR024088">
    <property type="entry name" value="Tyr-tRNA-ligase_bac-type"/>
</dbReference>
<dbReference type="InterPro" id="IPR024107">
    <property type="entry name" value="Tyr-tRNA-ligase_bac_1"/>
</dbReference>
<dbReference type="NCBIfam" id="TIGR00234">
    <property type="entry name" value="tyrS"/>
    <property type="match status" value="1"/>
</dbReference>
<dbReference type="PANTHER" id="PTHR11766:SF0">
    <property type="entry name" value="TYROSINE--TRNA LIGASE, MITOCHONDRIAL"/>
    <property type="match status" value="1"/>
</dbReference>
<dbReference type="PANTHER" id="PTHR11766">
    <property type="entry name" value="TYROSYL-TRNA SYNTHETASE"/>
    <property type="match status" value="1"/>
</dbReference>
<dbReference type="Pfam" id="PF22421">
    <property type="entry name" value="SYY_C-terminal"/>
    <property type="match status" value="1"/>
</dbReference>
<dbReference type="Pfam" id="PF00579">
    <property type="entry name" value="tRNA-synt_1b"/>
    <property type="match status" value="1"/>
</dbReference>
<dbReference type="PRINTS" id="PR01040">
    <property type="entry name" value="TRNASYNTHTYR"/>
</dbReference>
<dbReference type="SMART" id="SM00363">
    <property type="entry name" value="S4"/>
    <property type="match status" value="1"/>
</dbReference>
<dbReference type="SUPFAM" id="SSF55174">
    <property type="entry name" value="Alpha-L RNA-binding motif"/>
    <property type="match status" value="1"/>
</dbReference>
<dbReference type="SUPFAM" id="SSF52374">
    <property type="entry name" value="Nucleotidylyl transferase"/>
    <property type="match status" value="1"/>
</dbReference>
<dbReference type="PROSITE" id="PS00178">
    <property type="entry name" value="AA_TRNA_LIGASE_I"/>
    <property type="match status" value="1"/>
</dbReference>
<dbReference type="PROSITE" id="PS50889">
    <property type="entry name" value="S4"/>
    <property type="match status" value="1"/>
</dbReference>
<evidence type="ECO:0000255" key="1">
    <source>
        <dbReference type="HAMAP-Rule" id="MF_02006"/>
    </source>
</evidence>
<protein>
    <recommendedName>
        <fullName evidence="1">Tyrosine--tRNA ligase</fullName>
        <ecNumber evidence="1">6.1.1.1</ecNumber>
    </recommendedName>
    <alternativeName>
        <fullName evidence="1">Tyrosyl-tRNA synthetase</fullName>
        <shortName evidence="1">TyrRS</shortName>
    </alternativeName>
</protein>
<gene>
    <name evidence="1" type="primary">tyrS</name>
    <name type="ordered locus">UTI89_C1828</name>
</gene>
<sequence length="428" mass="48000">MEILMASSNLIKQLQERGLVAQVTDEEALAERLAQGPIALYCGFDPTADSLHLGHLVPLLCLKRFQQAGHKPVALVGGATGLIGDPSFKAAERKLNTEETVQEWVDKIRKQVAPFLDFDCGENSAIAANNYDWFGNMNVLTFLRDIGKHFSVNQMINKEAVKQRLNREDQGISFTEFSYNLLQGYDFACLNKQYGVVLQIGGSDQWGNITSGIDLTRRLHQNQVFGLTVPLITKADGTKFGKTEGGAVWLDPKKTSPYKFYQFWINTADADVYRFLKFFTFMSIEEINALEEEDKNSGKAPRAQYVLAEQVTRLVHGEDGLQAAKRITECLFSGSLSALSEADFEQLAQDGVPMVEMEKGADLMQALVDSELQPSRGQARKTIASNAITINGEKQSDPEYFFKEEDRLFGRFTLLRRGKKNYCLICWK</sequence>
<accession>Q1RBF8</accession>
<keyword id="KW-0007">Acetylation</keyword>
<keyword id="KW-0030">Aminoacyl-tRNA synthetase</keyword>
<keyword id="KW-0067">ATP-binding</keyword>
<keyword id="KW-0963">Cytoplasm</keyword>
<keyword id="KW-0436">Ligase</keyword>
<keyword id="KW-0547">Nucleotide-binding</keyword>
<keyword id="KW-0648">Protein biosynthesis</keyword>
<keyword id="KW-0694">RNA-binding</keyword>
<organism>
    <name type="scientific">Escherichia coli (strain UTI89 / UPEC)</name>
    <dbReference type="NCBI Taxonomy" id="364106"/>
    <lineage>
        <taxon>Bacteria</taxon>
        <taxon>Pseudomonadati</taxon>
        <taxon>Pseudomonadota</taxon>
        <taxon>Gammaproteobacteria</taxon>
        <taxon>Enterobacterales</taxon>
        <taxon>Enterobacteriaceae</taxon>
        <taxon>Escherichia</taxon>
    </lineage>
</organism>
<proteinExistence type="inferred from homology"/>
<feature type="chain" id="PRO_1000088589" description="Tyrosine--tRNA ligase">
    <location>
        <begin position="1"/>
        <end position="428"/>
    </location>
</feature>
<feature type="domain" description="S4 RNA-binding" evidence="1">
    <location>
        <begin position="361"/>
        <end position="418"/>
    </location>
</feature>
<feature type="short sequence motif" description="'HIGH' region">
    <location>
        <begin position="46"/>
        <end position="55"/>
    </location>
</feature>
<feature type="short sequence motif" description="'KMSKS' region">
    <location>
        <begin position="239"/>
        <end position="243"/>
    </location>
</feature>
<feature type="binding site" evidence="1">
    <location>
        <position position="41"/>
    </location>
    <ligand>
        <name>L-tyrosine</name>
        <dbReference type="ChEBI" id="CHEBI:58315"/>
    </ligand>
</feature>
<feature type="binding site" evidence="1">
    <location>
        <position position="179"/>
    </location>
    <ligand>
        <name>L-tyrosine</name>
        <dbReference type="ChEBI" id="CHEBI:58315"/>
    </ligand>
</feature>
<feature type="binding site" evidence="1">
    <location>
        <position position="183"/>
    </location>
    <ligand>
        <name>L-tyrosine</name>
        <dbReference type="ChEBI" id="CHEBI:58315"/>
    </ligand>
</feature>
<feature type="binding site" evidence="1">
    <location>
        <position position="242"/>
    </location>
    <ligand>
        <name>ATP</name>
        <dbReference type="ChEBI" id="CHEBI:30616"/>
    </ligand>
</feature>
<feature type="modified residue" description="N6-acetyllysine" evidence="1">
    <location>
        <position position="148"/>
    </location>
</feature>
<reference key="1">
    <citation type="journal article" date="2006" name="Proc. Natl. Acad. Sci. U.S.A.">
        <title>Identification of genes subject to positive selection in uropathogenic strains of Escherichia coli: a comparative genomics approach.</title>
        <authorList>
            <person name="Chen S.L."/>
            <person name="Hung C.-S."/>
            <person name="Xu J."/>
            <person name="Reigstad C.S."/>
            <person name="Magrini V."/>
            <person name="Sabo A."/>
            <person name="Blasiar D."/>
            <person name="Bieri T."/>
            <person name="Meyer R.R."/>
            <person name="Ozersky P."/>
            <person name="Armstrong J.R."/>
            <person name="Fulton R.S."/>
            <person name="Latreille J.P."/>
            <person name="Spieth J."/>
            <person name="Hooton T.M."/>
            <person name="Mardis E.R."/>
            <person name="Hultgren S.J."/>
            <person name="Gordon J.I."/>
        </authorList>
    </citation>
    <scope>NUCLEOTIDE SEQUENCE [LARGE SCALE GENOMIC DNA]</scope>
    <source>
        <strain>UTI89 / UPEC</strain>
    </source>
</reference>